<keyword id="KW-0687">Ribonucleoprotein</keyword>
<keyword id="KW-0689">Ribosomal protein</keyword>
<keyword id="KW-0694">RNA-binding</keyword>
<keyword id="KW-0699">rRNA-binding</keyword>
<proteinExistence type="inferred from homology"/>
<evidence type="ECO:0000255" key="1">
    <source>
        <dbReference type="HAMAP-Rule" id="MF_00500"/>
    </source>
</evidence>
<evidence type="ECO:0000256" key="2">
    <source>
        <dbReference type="SAM" id="MobiDB-lite"/>
    </source>
</evidence>
<evidence type="ECO:0000305" key="3"/>
<reference key="1">
    <citation type="journal article" date="2007" name="J. Bacteriol.">
        <title>Complete genome sequence of Haemophilus somnus (Histophilus somni) strain 129Pt and comparison to Haemophilus ducreyi 35000HP and Haemophilus influenzae Rd.</title>
        <authorList>
            <person name="Challacombe J.F."/>
            <person name="Duncan A.J."/>
            <person name="Brettin T.S."/>
            <person name="Bruce D."/>
            <person name="Chertkov O."/>
            <person name="Detter J.C."/>
            <person name="Han C.S."/>
            <person name="Misra M."/>
            <person name="Richardson P."/>
            <person name="Tapia R."/>
            <person name="Thayer N."/>
            <person name="Xie G."/>
            <person name="Inzana T.J."/>
        </authorList>
    </citation>
    <scope>NUCLEOTIDE SEQUENCE [LARGE SCALE GENOMIC DNA]</scope>
    <source>
        <strain>129Pt</strain>
    </source>
</reference>
<sequence>MANIKSAKKRAVQSEKRRQHNASQRSMMRTFIKKTYAAVATGDKAVAQAAFVEMQKVVDRMASKGLIHANKAANHKSKLAAQIKKLA</sequence>
<feature type="chain" id="PRO_1000014590" description="Small ribosomal subunit protein bS20">
    <location>
        <begin position="1"/>
        <end position="87"/>
    </location>
</feature>
<feature type="region of interest" description="Disordered" evidence="2">
    <location>
        <begin position="1"/>
        <end position="27"/>
    </location>
</feature>
<feature type="compositionally biased region" description="Basic residues" evidence="2">
    <location>
        <begin position="1"/>
        <end position="11"/>
    </location>
</feature>
<dbReference type="EMBL" id="CP000436">
    <property type="protein sequence ID" value="ABI24694.1"/>
    <property type="molecule type" value="Genomic_DNA"/>
</dbReference>
<dbReference type="SMR" id="Q0I2D7"/>
<dbReference type="KEGG" id="hso:HS_0416"/>
<dbReference type="eggNOG" id="COG0268">
    <property type="taxonomic scope" value="Bacteria"/>
</dbReference>
<dbReference type="HOGENOM" id="CLU_160655_4_0_6"/>
<dbReference type="GO" id="GO:0005829">
    <property type="term" value="C:cytosol"/>
    <property type="evidence" value="ECO:0007669"/>
    <property type="project" value="TreeGrafter"/>
</dbReference>
<dbReference type="GO" id="GO:0015935">
    <property type="term" value="C:small ribosomal subunit"/>
    <property type="evidence" value="ECO:0007669"/>
    <property type="project" value="TreeGrafter"/>
</dbReference>
<dbReference type="GO" id="GO:0070181">
    <property type="term" value="F:small ribosomal subunit rRNA binding"/>
    <property type="evidence" value="ECO:0007669"/>
    <property type="project" value="TreeGrafter"/>
</dbReference>
<dbReference type="GO" id="GO:0003735">
    <property type="term" value="F:structural constituent of ribosome"/>
    <property type="evidence" value="ECO:0007669"/>
    <property type="project" value="InterPro"/>
</dbReference>
<dbReference type="GO" id="GO:0006412">
    <property type="term" value="P:translation"/>
    <property type="evidence" value="ECO:0007669"/>
    <property type="project" value="UniProtKB-UniRule"/>
</dbReference>
<dbReference type="FunFam" id="1.20.58.110:FF:000001">
    <property type="entry name" value="30S ribosomal protein S20"/>
    <property type="match status" value="1"/>
</dbReference>
<dbReference type="Gene3D" id="1.20.58.110">
    <property type="entry name" value="Ribosomal protein S20"/>
    <property type="match status" value="1"/>
</dbReference>
<dbReference type="HAMAP" id="MF_00500">
    <property type="entry name" value="Ribosomal_bS20"/>
    <property type="match status" value="1"/>
</dbReference>
<dbReference type="InterPro" id="IPR002583">
    <property type="entry name" value="Ribosomal_bS20"/>
</dbReference>
<dbReference type="InterPro" id="IPR036510">
    <property type="entry name" value="Ribosomal_bS20_sf"/>
</dbReference>
<dbReference type="NCBIfam" id="TIGR00029">
    <property type="entry name" value="S20"/>
    <property type="match status" value="1"/>
</dbReference>
<dbReference type="PANTHER" id="PTHR33398">
    <property type="entry name" value="30S RIBOSOMAL PROTEIN S20"/>
    <property type="match status" value="1"/>
</dbReference>
<dbReference type="PANTHER" id="PTHR33398:SF1">
    <property type="entry name" value="SMALL RIBOSOMAL SUBUNIT PROTEIN BS20C"/>
    <property type="match status" value="1"/>
</dbReference>
<dbReference type="Pfam" id="PF01649">
    <property type="entry name" value="Ribosomal_S20p"/>
    <property type="match status" value="1"/>
</dbReference>
<dbReference type="SUPFAM" id="SSF46992">
    <property type="entry name" value="Ribosomal protein S20"/>
    <property type="match status" value="1"/>
</dbReference>
<comment type="function">
    <text evidence="1">Binds directly to 16S ribosomal RNA.</text>
</comment>
<comment type="similarity">
    <text evidence="1">Belongs to the bacterial ribosomal protein bS20 family.</text>
</comment>
<name>RS20_HISS1</name>
<organism>
    <name type="scientific">Histophilus somni (strain 129Pt)</name>
    <name type="common">Haemophilus somnus</name>
    <dbReference type="NCBI Taxonomy" id="205914"/>
    <lineage>
        <taxon>Bacteria</taxon>
        <taxon>Pseudomonadati</taxon>
        <taxon>Pseudomonadota</taxon>
        <taxon>Gammaproteobacteria</taxon>
        <taxon>Pasteurellales</taxon>
        <taxon>Pasteurellaceae</taxon>
        <taxon>Histophilus</taxon>
    </lineage>
</organism>
<protein>
    <recommendedName>
        <fullName evidence="1">Small ribosomal subunit protein bS20</fullName>
    </recommendedName>
    <alternativeName>
        <fullName evidence="3">30S ribosomal protein S20</fullName>
    </alternativeName>
</protein>
<gene>
    <name evidence="1" type="primary">rpsT</name>
    <name type="ordered locus">HS_0416</name>
</gene>
<accession>Q0I2D7</accession>